<keyword id="KW-0002">3D-structure</keyword>
<keyword id="KW-0020">Allergen</keyword>
<keyword id="KW-0106">Calcium</keyword>
<keyword id="KW-0165">Cleavage on pair of basic residues</keyword>
<keyword id="KW-0186">Copper</keyword>
<keyword id="KW-0903">Direct protein sequencing</keyword>
<keyword id="KW-1015">Disulfide bond</keyword>
<keyword id="KW-0446">Lipid-binding</keyword>
<keyword id="KW-0479">Metal-binding</keyword>
<keyword id="KW-0488">Methylation</keyword>
<keyword id="KW-0597">Phosphoprotein</keyword>
<keyword id="KW-1185">Reference proteome</keyword>
<keyword id="KW-0677">Repeat</keyword>
<keyword id="KW-0964">Secreted</keyword>
<keyword id="KW-0732">Signal</keyword>
<keyword id="KW-0862">Zinc</keyword>
<comment type="function">
    <text evidence="1 2">Binds water, Ca(2+), Na(+), K(+), fatty acids, hormones, bilirubin and drugs. Its main function is the regulation of the colloidal osmotic pressure of blood. Major zinc transporter in plasma, typically binds about 80% of all plasma zinc (By similarity). Major calcium and magnesium transporter in plasma, binds approximately 45% of circulating calcium and magnesium in plasma (By similarity). Potentially has more than two calcium-binding sites and might additionally bind calcium in a non-specific manner (By similarity). The shared binding site between zinc and calcium at residue Asp-273 suggests a crosstalk between zinc and calcium transport in the blood (By similarity). The rank order of affinity is zinc &gt; calcium &gt; magnesium (By similarity). Binds to the bacterial siderophore enterobactin and inhibits enterobactin-mediated iron uptake of E.coli from ferric transferrin, and may thereby limit the utilization of iron and growth of enteric bacteria such as E.coli (By similarity). Does not prevent iron uptake by the bacterial siderophore aerobactin (By similarity).</text>
</comment>
<comment type="subunit">
    <text evidence="1 4">Interacts with FCGRT; this interaction regulates ALB homeostasis (By similarity). Interacts with TASOR (By similarity). In plasma, occurs in a covalently-linked complex with chromophore-bound alpha-1-microglobulin; this interaction does not prevent fatty acid binding to ALB.</text>
</comment>
<comment type="subcellular location">
    <subcellularLocation>
        <location>Secreted</location>
    </subcellularLocation>
</comment>
<comment type="tissue specificity">
    <text>Plasma.</text>
</comment>
<comment type="PTM">
    <text evidence="1">Phosphorylated by FAM20C in the extracellular medium.</text>
</comment>
<comment type="allergen">
    <text evidence="7 8">Can cause allergic reactions in humans.</text>
</comment>
<comment type="similarity">
    <text evidence="6">Belongs to the ALB/AFP/VDB family.</text>
</comment>
<comment type="caution">
    <text evidence="3">Contains a tyrosine at position 27 instead of the conserved histidine found in mammalian homologs that is involved in copper binding.</text>
</comment>
<evidence type="ECO:0000250" key="1">
    <source>
        <dbReference type="UniProtKB" id="P02768"/>
    </source>
</evidence>
<evidence type="ECO:0000250" key="2">
    <source>
        <dbReference type="UniProtKB" id="P02769"/>
    </source>
</evidence>
<evidence type="ECO:0000250" key="3">
    <source>
        <dbReference type="UniProtKB" id="P02770"/>
    </source>
</evidence>
<evidence type="ECO:0000250" key="4">
    <source>
        <dbReference type="UniProtKB" id="P07724"/>
    </source>
</evidence>
<evidence type="ECO:0000255" key="5"/>
<evidence type="ECO:0000255" key="6">
    <source>
        <dbReference type="PROSITE-ProRule" id="PRU00769"/>
    </source>
</evidence>
<evidence type="ECO:0000269" key="7">
    <source>
    </source>
</evidence>
<evidence type="ECO:0000269" key="8">
    <source>
    </source>
</evidence>
<evidence type="ECO:0000305" key="9"/>
<evidence type="ECO:0007829" key="10">
    <source>
        <dbReference type="PDB" id="5GHK"/>
    </source>
</evidence>
<sequence>MKWVTFISLFFLFSSAYSRGLVRREAYKSEIAHRYNDLGEEHFRGLVLVAFSQYLQQCPFEDHVKLAKEVTEFAKACAAEESGANCDKSLHTLFGDKLCTVASLRDKYGDMADCCEKQEPDRNECFLAHKDDNPGFPPLVAPEPDALCAAFQDNEQLFLGKYLYEIARRHPYFYAPELLYYAQQYKGVFAECCQAADKAACLGPKIEALREKVLLSSAKERFKCASLQKFGDRAFKAWSVARLSQRFPKADFAEISKVVTDLTKVHKECCHGDLLECADDRADLAKYMCENQDSISTKLKECCDKPVLEKSQCLAEVERDELPGDLPSLAADFVEDKEVCKNYQEAKDVFLGTFLYEYARRHPEYSVSLLLRLAKEYEATLEKCCATDDPPTCYAKVLDEFKPLVDEPQNLVKTNCELFEKLGEYGFQNALLVRYTKKAPQVSTPTLVEVSRKLGKVGTKCCKKPESERMSCAEDFLSVVLNRLCVLHEKTPVSERVTKCCSESLVNRRPCFSGLEVDETYVPKEFNAETFTFHADLCTLPEAEKQVKKQTALVELLKHKPKATDEQLKTVMGDFGAFVEKCCAAENKEGCFSEEGPKLVAAAQAALV</sequence>
<organism>
    <name type="scientific">Canis lupus familiaris</name>
    <name type="common">Dog</name>
    <name type="synonym">Canis familiaris</name>
    <dbReference type="NCBI Taxonomy" id="9615"/>
    <lineage>
        <taxon>Eukaryota</taxon>
        <taxon>Metazoa</taxon>
        <taxon>Chordata</taxon>
        <taxon>Craniata</taxon>
        <taxon>Vertebrata</taxon>
        <taxon>Euteleostomi</taxon>
        <taxon>Mammalia</taxon>
        <taxon>Eutheria</taxon>
        <taxon>Laurasiatheria</taxon>
        <taxon>Carnivora</taxon>
        <taxon>Caniformia</taxon>
        <taxon>Canidae</taxon>
        <taxon>Canis</taxon>
    </lineage>
</organism>
<dbReference type="EMBL" id="AJ133489">
    <property type="protein sequence ID" value="CAB64867.1"/>
    <property type="molecule type" value="mRNA"/>
</dbReference>
<dbReference type="EMBL" id="Y17737">
    <property type="protein sequence ID" value="CAA76841.1"/>
    <property type="molecule type" value="mRNA"/>
</dbReference>
<dbReference type="EMBL" id="AB090854">
    <property type="protein sequence ID" value="BAC10663.1"/>
    <property type="molecule type" value="mRNA"/>
</dbReference>
<dbReference type="EMBL" id="S72946">
    <property type="protein sequence ID" value="AAB30434.1"/>
    <property type="molecule type" value="mRNA"/>
</dbReference>
<dbReference type="PIR" id="S29749">
    <property type="entry name" value="S29749"/>
</dbReference>
<dbReference type="RefSeq" id="NP_001003026.1">
    <property type="nucleotide sequence ID" value="NM_001003026.1"/>
</dbReference>
<dbReference type="PDB" id="5GHK">
    <property type="method" value="X-ray"/>
    <property type="resolution" value="3.20 A"/>
    <property type="chains" value="A=25-608"/>
</dbReference>
<dbReference type="PDBsum" id="5GHK"/>
<dbReference type="BMRB" id="P49822"/>
<dbReference type="SMR" id="P49822"/>
<dbReference type="FunCoup" id="P49822">
    <property type="interactions" value="87"/>
</dbReference>
<dbReference type="Allergome" id="176">
    <property type="allergen name" value="Can f 3"/>
</dbReference>
<dbReference type="Allergome" id="3171">
    <property type="allergen name" value="Can f 3.0101"/>
</dbReference>
<dbReference type="PaxDb" id="9612-ENSCAFP00000004489"/>
<dbReference type="eggNOG" id="ENOG502R7EA">
    <property type="taxonomic scope" value="Eukaryota"/>
</dbReference>
<dbReference type="InParanoid" id="P49822"/>
<dbReference type="OrthoDB" id="9875082at2759"/>
<dbReference type="Proteomes" id="UP000002254">
    <property type="component" value="Unplaced"/>
</dbReference>
<dbReference type="Proteomes" id="UP000694429">
    <property type="component" value="Unplaced"/>
</dbReference>
<dbReference type="Proteomes" id="UP000694542">
    <property type="component" value="Unplaced"/>
</dbReference>
<dbReference type="Proteomes" id="UP000805418">
    <property type="component" value="Unplaced"/>
</dbReference>
<dbReference type="GO" id="GO:0005737">
    <property type="term" value="C:cytoplasm"/>
    <property type="evidence" value="ECO:0000318"/>
    <property type="project" value="GO_Central"/>
</dbReference>
<dbReference type="GO" id="GO:0005615">
    <property type="term" value="C:extracellular space"/>
    <property type="evidence" value="ECO:0007669"/>
    <property type="project" value="InterPro"/>
</dbReference>
<dbReference type="GO" id="GO:0032991">
    <property type="term" value="C:protein-containing complex"/>
    <property type="evidence" value="ECO:0000250"/>
    <property type="project" value="UniProtKB"/>
</dbReference>
<dbReference type="GO" id="GO:0003677">
    <property type="term" value="F:DNA binding"/>
    <property type="evidence" value="ECO:0000250"/>
    <property type="project" value="UniProtKB"/>
</dbReference>
<dbReference type="GO" id="GO:1903981">
    <property type="term" value="F:enterobactin binding"/>
    <property type="evidence" value="ECO:0000250"/>
    <property type="project" value="UniProtKB"/>
</dbReference>
<dbReference type="GO" id="GO:0005504">
    <property type="term" value="F:fatty acid binding"/>
    <property type="evidence" value="ECO:0000250"/>
    <property type="project" value="UniProtKB"/>
</dbReference>
<dbReference type="GO" id="GO:0046872">
    <property type="term" value="F:metal ion binding"/>
    <property type="evidence" value="ECO:0007669"/>
    <property type="project" value="UniProtKB-KW"/>
</dbReference>
<dbReference type="GO" id="GO:0030170">
    <property type="term" value="F:pyridoxal phosphate binding"/>
    <property type="evidence" value="ECO:0000250"/>
    <property type="project" value="UniProtKB"/>
</dbReference>
<dbReference type="GO" id="GO:0015643">
    <property type="term" value="F:toxic substance binding"/>
    <property type="evidence" value="ECO:0000250"/>
    <property type="project" value="UniProtKB"/>
</dbReference>
<dbReference type="GO" id="GO:0072732">
    <property type="term" value="P:cellular response to calcium ion starvation"/>
    <property type="evidence" value="ECO:0000250"/>
    <property type="project" value="UniProtKB"/>
</dbReference>
<dbReference type="GO" id="GO:0009267">
    <property type="term" value="P:cellular response to starvation"/>
    <property type="evidence" value="ECO:0000250"/>
    <property type="project" value="UniProtKB"/>
</dbReference>
<dbReference type="GO" id="GO:0051902">
    <property type="term" value="P:negative regulation of mitochondrial depolarization"/>
    <property type="evidence" value="ECO:0000250"/>
    <property type="project" value="UniProtKB"/>
</dbReference>
<dbReference type="CDD" id="cd00015">
    <property type="entry name" value="ALBUMIN"/>
    <property type="match status" value="3"/>
</dbReference>
<dbReference type="FunFam" id="1.10.246.10:FF:000001">
    <property type="entry name" value="Serum albumin"/>
    <property type="match status" value="2"/>
</dbReference>
<dbReference type="FunFam" id="1.10.246.10:FF:000002">
    <property type="entry name" value="Serum albumin"/>
    <property type="match status" value="2"/>
</dbReference>
<dbReference type="FunFam" id="1.10.246.10:FF:000003">
    <property type="entry name" value="Serum albumin"/>
    <property type="match status" value="1"/>
</dbReference>
<dbReference type="Gene3D" id="1.10.246.10">
    <property type="match status" value="6"/>
</dbReference>
<dbReference type="InterPro" id="IPR000264">
    <property type="entry name" value="ALB/AFP/VDB"/>
</dbReference>
<dbReference type="InterPro" id="IPR020858">
    <property type="entry name" value="Serum_albumin-like"/>
</dbReference>
<dbReference type="InterPro" id="IPR021177">
    <property type="entry name" value="Serum_albumin/AFP/Afamin"/>
</dbReference>
<dbReference type="InterPro" id="IPR020857">
    <property type="entry name" value="Serum_albumin_CS"/>
</dbReference>
<dbReference type="InterPro" id="IPR014760">
    <property type="entry name" value="Serum_albumin_N"/>
</dbReference>
<dbReference type="PANTHER" id="PTHR11385:SF15">
    <property type="entry name" value="ALBUMIN"/>
    <property type="match status" value="1"/>
</dbReference>
<dbReference type="PANTHER" id="PTHR11385">
    <property type="entry name" value="SERUM ALBUMIN-RELATED"/>
    <property type="match status" value="1"/>
</dbReference>
<dbReference type="Pfam" id="PF00273">
    <property type="entry name" value="Serum_albumin"/>
    <property type="match status" value="3"/>
</dbReference>
<dbReference type="PIRSF" id="PIRSF002520">
    <property type="entry name" value="Serum_albumin_subgroup"/>
    <property type="match status" value="1"/>
</dbReference>
<dbReference type="PRINTS" id="PR00802">
    <property type="entry name" value="SERUMALBUMIN"/>
</dbReference>
<dbReference type="SMART" id="SM00103">
    <property type="entry name" value="ALBUMIN"/>
    <property type="match status" value="3"/>
</dbReference>
<dbReference type="SUPFAM" id="SSF48552">
    <property type="entry name" value="Serum albumin-like"/>
    <property type="match status" value="3"/>
</dbReference>
<dbReference type="PROSITE" id="PS00212">
    <property type="entry name" value="ALBUMIN_1"/>
    <property type="match status" value="3"/>
</dbReference>
<dbReference type="PROSITE" id="PS51438">
    <property type="entry name" value="ALBUMIN_2"/>
    <property type="match status" value="3"/>
</dbReference>
<protein>
    <recommendedName>
        <fullName>Albumin</fullName>
    </recommendedName>
    <allergenName>Can f 3</allergenName>
</protein>
<proteinExistence type="evidence at protein level"/>
<feature type="signal peptide" evidence="5">
    <location>
        <begin position="1"/>
        <end position="18"/>
    </location>
</feature>
<feature type="propeptide" id="PRO_0000001059">
    <location>
        <begin position="19"/>
        <end position="24"/>
    </location>
</feature>
<feature type="chain" id="PRO_0000001060" description="Albumin">
    <location>
        <begin position="25"/>
        <end position="608"/>
    </location>
</feature>
<feature type="domain" description="Albumin 1" evidence="6">
    <location>
        <begin position="19"/>
        <end position="210"/>
    </location>
</feature>
<feature type="domain" description="Albumin 2" evidence="6">
    <location>
        <begin position="211"/>
        <end position="403"/>
    </location>
</feature>
<feature type="domain" description="Albumin 3" evidence="6">
    <location>
        <begin position="404"/>
        <end position="601"/>
    </location>
</feature>
<feature type="binding site" evidence="2">
    <location>
        <position position="30"/>
    </location>
    <ligand>
        <name>Ca(2+)</name>
        <dbReference type="ChEBI" id="CHEBI:29108"/>
        <label>1</label>
    </ligand>
</feature>
<feature type="binding site" evidence="2">
    <location>
        <position position="37"/>
    </location>
    <ligand>
        <name>Ca(2+)</name>
        <dbReference type="ChEBI" id="CHEBI:29108"/>
        <label>2</label>
    </ligand>
</feature>
<feature type="binding site" evidence="1">
    <location>
        <position position="91"/>
    </location>
    <ligand>
        <name>Zn(2+)</name>
        <dbReference type="ChEBI" id="CHEBI:29105"/>
    </ligand>
</feature>
<feature type="binding site" evidence="2">
    <location>
        <position position="268"/>
    </location>
    <ligand>
        <name>Ca(2+)</name>
        <dbReference type="ChEBI" id="CHEBI:29108"/>
        <label>1</label>
    </ligand>
</feature>
<feature type="binding site" evidence="1">
    <location>
        <position position="271"/>
    </location>
    <ligand>
        <name>Zn(2+)</name>
        <dbReference type="ChEBI" id="CHEBI:29105"/>
    </ligand>
</feature>
<feature type="binding site" evidence="2">
    <location>
        <position position="273"/>
    </location>
    <ligand>
        <name>Ca(2+)</name>
        <dbReference type="ChEBI" id="CHEBI:29108"/>
        <label>1</label>
    </ligand>
</feature>
<feature type="binding site" evidence="1">
    <location>
        <position position="273"/>
    </location>
    <ligand>
        <name>Zn(2+)</name>
        <dbReference type="ChEBI" id="CHEBI:29105"/>
    </ligand>
</feature>
<feature type="binding site" evidence="2">
    <location>
        <position position="276"/>
    </location>
    <ligand>
        <name>Ca(2+)</name>
        <dbReference type="ChEBI" id="CHEBI:29108"/>
        <label>1</label>
    </ligand>
</feature>
<feature type="binding site" evidence="2">
    <location>
        <position position="279"/>
    </location>
    <ligand>
        <name>Ca(2+)</name>
        <dbReference type="ChEBI" id="CHEBI:29108"/>
        <label>2</label>
    </ligand>
</feature>
<feature type="binding site" evidence="2">
    <location>
        <position position="283"/>
    </location>
    <ligand>
        <name>Ca(2+)</name>
        <dbReference type="ChEBI" id="CHEBI:29108"/>
        <label>2</label>
    </ligand>
</feature>
<feature type="modified residue" description="Phosphoserine" evidence="1">
    <location>
        <position position="29"/>
    </location>
</feature>
<feature type="modified residue" description="Phosphoserine" evidence="1">
    <location>
        <position position="82"/>
    </location>
</feature>
<feature type="modified residue" description="Phosphoserine" evidence="1">
    <location>
        <position position="89"/>
    </location>
</feature>
<feature type="modified residue" description="N6-succinyllysine" evidence="4">
    <location>
        <position position="229"/>
    </location>
</feature>
<feature type="modified residue" description="Phosphoserine" evidence="1">
    <location>
        <position position="443"/>
    </location>
</feature>
<feature type="modified residue" description="Phosphothreonine" evidence="1">
    <location>
        <position position="444"/>
    </location>
</feature>
<feature type="modified residue" description="Phosphothreonine" evidence="1">
    <location>
        <position position="446"/>
    </location>
</feature>
<feature type="modified residue" description="N6-succinyllysine" evidence="4">
    <location>
        <position position="460"/>
    </location>
</feature>
<feature type="modified residue" description="Phosphoserine" evidence="1">
    <location>
        <position position="513"/>
    </location>
</feature>
<feature type="modified residue" description="N6-methyllysine" evidence="1">
    <location>
        <position position="558"/>
    </location>
</feature>
<feature type="modified residue" description="Phosphothreonine" evidence="3">
    <location>
        <position position="570"/>
    </location>
</feature>
<feature type="modified residue" description="N6-succinyllysine" evidence="4">
    <location>
        <position position="588"/>
    </location>
</feature>
<feature type="disulfide bond" evidence="6">
    <location>
        <begin position="77"/>
        <end position="86"/>
    </location>
</feature>
<feature type="disulfide bond" evidence="6">
    <location>
        <begin position="99"/>
        <end position="115"/>
    </location>
</feature>
<feature type="disulfide bond" evidence="6">
    <location>
        <begin position="114"/>
        <end position="125"/>
    </location>
</feature>
<feature type="disulfide bond" evidence="6">
    <location>
        <begin position="148"/>
        <end position="193"/>
    </location>
</feature>
<feature type="disulfide bond" evidence="6">
    <location>
        <begin position="192"/>
        <end position="201"/>
    </location>
</feature>
<feature type="disulfide bond" evidence="6">
    <location>
        <begin position="224"/>
        <end position="270"/>
    </location>
</feature>
<feature type="disulfide bond" evidence="6">
    <location>
        <begin position="269"/>
        <end position="277"/>
    </location>
</feature>
<feature type="disulfide bond" evidence="6">
    <location>
        <begin position="289"/>
        <end position="303"/>
    </location>
</feature>
<feature type="disulfide bond" evidence="6">
    <location>
        <begin position="302"/>
        <end position="313"/>
    </location>
</feature>
<feature type="disulfide bond" evidence="6">
    <location>
        <begin position="340"/>
        <end position="385"/>
    </location>
</feature>
<feature type="disulfide bond" evidence="6">
    <location>
        <begin position="384"/>
        <end position="393"/>
    </location>
</feature>
<feature type="disulfide bond" evidence="6">
    <location>
        <begin position="416"/>
        <end position="462"/>
    </location>
</feature>
<feature type="disulfide bond" evidence="6">
    <location>
        <begin position="461"/>
        <end position="472"/>
    </location>
</feature>
<feature type="disulfide bond" evidence="6">
    <location>
        <begin position="485"/>
        <end position="501"/>
    </location>
</feature>
<feature type="disulfide bond" evidence="6">
    <location>
        <begin position="500"/>
        <end position="511"/>
    </location>
</feature>
<feature type="disulfide bond" evidence="6">
    <location>
        <begin position="538"/>
        <end position="583"/>
    </location>
</feature>
<feature type="disulfide bond" evidence="6">
    <location>
        <begin position="582"/>
        <end position="591"/>
    </location>
</feature>
<feature type="sequence conflict" description="In Ref. 2; CAA76841." evidence="9" ref="2">
    <original>MKWVTFISLFFLFSSAYSRGLVRREA</original>
    <variation>MDT</variation>
    <location>
        <begin position="1"/>
        <end position="26"/>
    </location>
</feature>
<feature type="sequence conflict" description="In Ref. 2; CAA76841." evidence="9" ref="2">
    <original>A</original>
    <variation>R</variation>
    <location>
        <position position="146"/>
    </location>
</feature>
<feature type="sequence conflict" description="In Ref. 2; CAA76841." evidence="9" ref="2">
    <original>I</original>
    <variation>T</variation>
    <location>
        <position position="206"/>
    </location>
</feature>
<feature type="sequence conflict" description="In Ref. 2; CAA76841." evidence="9" ref="2">
    <original>V</original>
    <variation>A</variation>
    <location>
        <position position="349"/>
    </location>
</feature>
<feature type="sequence conflict" description="In Ref. 2; CAA76841 and 6; AAB30434." evidence="9" ref="2 6">
    <original>A</original>
    <variation>S</variation>
    <location>
        <position position="359"/>
    </location>
</feature>
<feature type="sequence conflict" description="In Ref. 6; AAB30434." evidence="9" ref="6">
    <original>V</original>
    <variation>VV</variation>
    <location>
        <position position="448"/>
    </location>
</feature>
<feature type="sequence conflict" description="In Ref. 2; CAA76841 and 6; AAB30434." evidence="9" ref="2 6">
    <original>E</original>
    <variation>D</variation>
    <location>
        <position position="474"/>
    </location>
</feature>
<feature type="helix" evidence="10">
    <location>
        <begin position="30"/>
        <end position="38"/>
    </location>
</feature>
<feature type="helix" evidence="10">
    <location>
        <begin position="40"/>
        <end position="55"/>
    </location>
</feature>
<feature type="helix" evidence="10">
    <location>
        <begin position="60"/>
        <end position="79"/>
    </location>
</feature>
<feature type="strand" evidence="10">
    <location>
        <begin position="86"/>
        <end position="88"/>
    </location>
</feature>
<feature type="helix" evidence="10">
    <location>
        <begin position="90"/>
        <end position="100"/>
    </location>
</feature>
<feature type="helix" evidence="10">
    <location>
        <begin position="113"/>
        <end position="116"/>
    </location>
</feature>
<feature type="helix" evidence="10">
    <location>
        <begin position="121"/>
        <end position="128"/>
    </location>
</feature>
<feature type="helix" evidence="10">
    <location>
        <begin position="147"/>
        <end position="153"/>
    </location>
</feature>
<feature type="helix" evidence="10">
    <location>
        <begin position="155"/>
        <end position="169"/>
    </location>
</feature>
<feature type="helix" evidence="10">
    <location>
        <begin position="175"/>
        <end position="192"/>
    </location>
</feature>
<feature type="helix" evidence="10">
    <location>
        <begin position="199"/>
        <end position="229"/>
    </location>
</feature>
<feature type="helix" evidence="10">
    <location>
        <begin position="232"/>
        <end position="246"/>
    </location>
</feature>
<feature type="strand" evidence="10">
    <location>
        <begin position="248"/>
        <end position="250"/>
    </location>
</feature>
<feature type="helix" evidence="10">
    <location>
        <begin position="252"/>
        <end position="269"/>
    </location>
</feature>
<feature type="turn" evidence="10">
    <location>
        <begin position="270"/>
        <end position="272"/>
    </location>
</feature>
<feature type="helix" evidence="10">
    <location>
        <begin position="274"/>
        <end position="290"/>
    </location>
</feature>
<feature type="helix" evidence="10">
    <location>
        <begin position="292"/>
        <end position="294"/>
    </location>
</feature>
<feature type="helix" evidence="10">
    <location>
        <begin position="298"/>
        <end position="300"/>
    </location>
</feature>
<feature type="helix" evidence="10">
    <location>
        <begin position="302"/>
        <end position="304"/>
    </location>
</feature>
<feature type="helix" evidence="10">
    <location>
        <begin position="308"/>
        <end position="316"/>
    </location>
</feature>
<feature type="helix" evidence="10">
    <location>
        <begin position="330"/>
        <end position="333"/>
    </location>
</feature>
<feature type="helix" evidence="10">
    <location>
        <begin position="339"/>
        <end position="345"/>
    </location>
</feature>
<feature type="helix" evidence="10">
    <location>
        <begin position="347"/>
        <end position="361"/>
    </location>
</feature>
<feature type="helix" evidence="10">
    <location>
        <begin position="367"/>
        <end position="383"/>
    </location>
</feature>
<feature type="turn" evidence="10">
    <location>
        <begin position="391"/>
        <end position="395"/>
    </location>
</feature>
<feature type="helix" evidence="10">
    <location>
        <begin position="397"/>
        <end position="399"/>
    </location>
</feature>
<feature type="helix" evidence="10">
    <location>
        <begin position="401"/>
        <end position="438"/>
    </location>
</feature>
<feature type="helix" evidence="10">
    <location>
        <begin position="444"/>
        <end position="460"/>
    </location>
</feature>
<feature type="strand" evidence="10">
    <location>
        <begin position="461"/>
        <end position="464"/>
    </location>
</feature>
<feature type="helix" evidence="10">
    <location>
        <begin position="466"/>
        <end position="468"/>
    </location>
</feature>
<feature type="helix" evidence="10">
    <location>
        <begin position="469"/>
        <end position="490"/>
    </location>
</feature>
<feature type="helix" evidence="10">
    <location>
        <begin position="495"/>
        <end position="503"/>
    </location>
</feature>
<feature type="strand" evidence="10">
    <location>
        <begin position="505"/>
        <end position="507"/>
    </location>
</feature>
<feature type="helix" evidence="10">
    <location>
        <begin position="508"/>
        <end position="513"/>
    </location>
</feature>
<feature type="turn" evidence="10">
    <location>
        <begin position="528"/>
        <end position="531"/>
    </location>
</feature>
<feature type="helix" evidence="10">
    <location>
        <begin position="535"/>
        <end position="538"/>
    </location>
</feature>
<feature type="helix" evidence="10">
    <location>
        <begin position="542"/>
        <end position="557"/>
    </location>
</feature>
<feature type="helix" evidence="10">
    <location>
        <begin position="565"/>
        <end position="583"/>
    </location>
</feature>
<feature type="helix" evidence="10">
    <location>
        <begin position="591"/>
        <end position="594"/>
    </location>
</feature>
<feature type="helix" evidence="10">
    <location>
        <begin position="595"/>
        <end position="598"/>
    </location>
</feature>
<feature type="helix" evidence="10">
    <location>
        <begin position="600"/>
        <end position="606"/>
    </location>
</feature>
<name>ALBU_CANLF</name>
<gene>
    <name type="primary">ALB</name>
</gene>
<reference key="1">
    <citation type="submission" date="1999-03" db="EMBL/GenBank/DDBJ databases">
        <authorList>
            <person name="Hilger C."/>
        </authorList>
    </citation>
    <scope>NUCLEOTIDE SEQUENCE [MRNA]</scope>
    <source>
        <strain>Beagle</strain>
        <tissue>Liver</tissue>
    </source>
</reference>
<reference key="2">
    <citation type="journal article" date="2000" name="J. Allergy Clin. Immunol.">
        <title>Escherichia coli expression and purification of recombinant dog albumin, a cross-reactive animal allergen.</title>
        <authorList>
            <person name="Pandjaitan B."/>
            <person name="Swoboda I."/>
            <person name="Brandejsky-Pichler F."/>
            <person name="Rumpold H."/>
            <person name="Valenta R."/>
            <person name="Spitzauer S."/>
        </authorList>
    </citation>
    <scope>NUCLEOTIDE SEQUENCE [MRNA]</scope>
    <scope>ALLERGEN</scope>
    <source>
        <tissue>Liver</tissue>
    </source>
</reference>
<reference key="3">
    <citation type="submission" date="2002-08" db="EMBL/GenBank/DDBJ databases">
        <title>Isolation of a cDNA encoding canine serum albumin.</title>
        <authorList>
            <person name="Miyake M."/>
            <person name="Okazaki M."/>
            <person name="Iwabuchi S."/>
        </authorList>
    </citation>
    <scope>NUCLEOTIDE SEQUENCE [MRNA]</scope>
    <source>
        <strain>Beagle</strain>
        <tissue>Liver</tissue>
    </source>
</reference>
<reference key="4">
    <citation type="journal article" date="1974" name="J. Biol. Chem.">
        <title>Isolation, amino acid sequence and copper(II)-binding properties of peptide (1-24) of dog serum albumin.</title>
        <authorList>
            <person name="Dixon J.W."/>
            <person name="Sarkar B."/>
        </authorList>
    </citation>
    <scope>PROTEIN SEQUENCE OF 25-48</scope>
</reference>
<reference key="5">
    <citation type="journal article" date="1997" name="Electrophoresis">
        <title>HSC-2DPAGE and the two-dimensional gel electrophoresis database of dog heart proteins.</title>
        <authorList>
            <person name="Dunn M.J."/>
            <person name="Corbett J.M."/>
            <person name="Wheeler C.H."/>
        </authorList>
    </citation>
    <scope>PROTEIN SEQUENCE OF 25-38</scope>
    <source>
        <tissue>Heart</tissue>
    </source>
</reference>
<reference key="6">
    <citation type="journal article" date="1994" name="J. Allergy Clin. Immunol.">
        <title>Molecular characterization of dog albumin as a cross-reactive allergen.</title>
        <authorList>
            <person name="Spitzauer S."/>
            <person name="Schweiger C."/>
            <person name="Sperr W.R."/>
            <person name="Pandjaitan B."/>
            <person name="Valent P."/>
            <person name="Muehl S."/>
            <person name="Ebner C."/>
            <person name="Scheiner O."/>
            <person name="Kraft D."/>
            <person name="Rumpold H."/>
        </authorList>
    </citation>
    <scope>NUCLEOTIDE SEQUENCE [MRNA] OF 215-478</scope>
    <scope>ALLERGEN</scope>
    <source>
        <tissue>Salivary gland</tissue>
    </source>
</reference>
<accession>P49822</accession>
<accession>O77705</accession>
<accession>Q9TSZ4</accession>